<feature type="chain" id="PRO_0000075148" description="Alanine--tRNA ligase">
    <location>
        <begin position="1"/>
        <end position="902"/>
    </location>
</feature>
<feature type="binding site" evidence="1">
    <location>
        <position position="567"/>
    </location>
    <ligand>
        <name>Zn(2+)</name>
        <dbReference type="ChEBI" id="CHEBI:29105"/>
    </ligand>
</feature>
<feature type="binding site" evidence="1">
    <location>
        <position position="571"/>
    </location>
    <ligand>
        <name>Zn(2+)</name>
        <dbReference type="ChEBI" id="CHEBI:29105"/>
    </ligand>
</feature>
<feature type="binding site" evidence="1">
    <location>
        <position position="671"/>
    </location>
    <ligand>
        <name>Zn(2+)</name>
        <dbReference type="ChEBI" id="CHEBI:29105"/>
    </ligand>
</feature>
<feature type="binding site" evidence="1">
    <location>
        <position position="675"/>
    </location>
    <ligand>
        <name>Zn(2+)</name>
        <dbReference type="ChEBI" id="CHEBI:29105"/>
    </ligand>
</feature>
<protein>
    <recommendedName>
        <fullName evidence="1">Alanine--tRNA ligase</fullName>
        <ecNumber evidence="1">6.1.1.7</ecNumber>
    </recommendedName>
    <alternativeName>
        <fullName evidence="1">Alanyl-tRNA synthetase</fullName>
        <shortName evidence="1">AlaRS</shortName>
    </alternativeName>
</protein>
<proteinExistence type="inferred from homology"/>
<reference key="1">
    <citation type="journal article" date="2003" name="Microbiology">
        <title>The complete genome sequence of the avian pathogen Mycoplasma gallisepticum strain R(low).</title>
        <authorList>
            <person name="Papazisi L."/>
            <person name="Gorton T.S."/>
            <person name="Kutish G."/>
            <person name="Markham P.F."/>
            <person name="Browning G.F."/>
            <person name="Nguyen D.K."/>
            <person name="Swartzell S."/>
            <person name="Madan A."/>
            <person name="Mahairas G."/>
            <person name="Geary S.J."/>
        </authorList>
    </citation>
    <scope>NUCLEOTIDE SEQUENCE [LARGE SCALE GENOMIC DNA]</scope>
    <source>
        <strain>R(low / passage 15 / clone 2)</strain>
    </source>
</reference>
<name>SYA_MYCGA</name>
<dbReference type="EC" id="6.1.1.7" evidence="1"/>
<dbReference type="EMBL" id="AE015450">
    <property type="protein sequence ID" value="AAP56472.2"/>
    <property type="molecule type" value="Genomic_DNA"/>
</dbReference>
<dbReference type="RefSeq" id="WP_011113351.1">
    <property type="nucleotide sequence ID" value="NC_004829.2"/>
</dbReference>
<dbReference type="SMR" id="Q7NBY8"/>
<dbReference type="GeneID" id="93509937"/>
<dbReference type="KEGG" id="mga:MGA_0834"/>
<dbReference type="PATRIC" id="fig|233150.7.peg.136"/>
<dbReference type="HOGENOM" id="CLU_004485_1_1_14"/>
<dbReference type="OrthoDB" id="9803884at2"/>
<dbReference type="Proteomes" id="UP000001418">
    <property type="component" value="Chromosome"/>
</dbReference>
<dbReference type="GO" id="GO:0005829">
    <property type="term" value="C:cytosol"/>
    <property type="evidence" value="ECO:0007669"/>
    <property type="project" value="TreeGrafter"/>
</dbReference>
<dbReference type="GO" id="GO:0004813">
    <property type="term" value="F:alanine-tRNA ligase activity"/>
    <property type="evidence" value="ECO:0007669"/>
    <property type="project" value="UniProtKB-UniRule"/>
</dbReference>
<dbReference type="GO" id="GO:0002161">
    <property type="term" value="F:aminoacyl-tRNA deacylase activity"/>
    <property type="evidence" value="ECO:0007669"/>
    <property type="project" value="TreeGrafter"/>
</dbReference>
<dbReference type="GO" id="GO:0005524">
    <property type="term" value="F:ATP binding"/>
    <property type="evidence" value="ECO:0007669"/>
    <property type="project" value="UniProtKB-UniRule"/>
</dbReference>
<dbReference type="GO" id="GO:0000049">
    <property type="term" value="F:tRNA binding"/>
    <property type="evidence" value="ECO:0007669"/>
    <property type="project" value="UniProtKB-KW"/>
</dbReference>
<dbReference type="GO" id="GO:0008270">
    <property type="term" value="F:zinc ion binding"/>
    <property type="evidence" value="ECO:0007669"/>
    <property type="project" value="UniProtKB-UniRule"/>
</dbReference>
<dbReference type="GO" id="GO:0006419">
    <property type="term" value="P:alanyl-tRNA aminoacylation"/>
    <property type="evidence" value="ECO:0007669"/>
    <property type="project" value="UniProtKB-UniRule"/>
</dbReference>
<dbReference type="CDD" id="cd00673">
    <property type="entry name" value="AlaRS_core"/>
    <property type="match status" value="1"/>
</dbReference>
<dbReference type="FunFam" id="3.30.930.10:FF:000046">
    <property type="entry name" value="Alanine--tRNA ligase"/>
    <property type="match status" value="1"/>
</dbReference>
<dbReference type="FunFam" id="3.30.980.10:FF:000004">
    <property type="entry name" value="Alanine--tRNA ligase, cytoplasmic"/>
    <property type="match status" value="1"/>
</dbReference>
<dbReference type="Gene3D" id="2.40.30.130">
    <property type="match status" value="1"/>
</dbReference>
<dbReference type="Gene3D" id="3.10.310.40">
    <property type="match status" value="1"/>
</dbReference>
<dbReference type="Gene3D" id="3.30.930.10">
    <property type="entry name" value="Bira Bifunctional Protein, Domain 2"/>
    <property type="match status" value="1"/>
</dbReference>
<dbReference type="Gene3D" id="3.30.980.10">
    <property type="entry name" value="Threonyl-trna Synthetase, Chain A, domain 2"/>
    <property type="match status" value="1"/>
</dbReference>
<dbReference type="HAMAP" id="MF_00036_B">
    <property type="entry name" value="Ala_tRNA_synth_B"/>
    <property type="match status" value="1"/>
</dbReference>
<dbReference type="InterPro" id="IPR045864">
    <property type="entry name" value="aa-tRNA-synth_II/BPL/LPL"/>
</dbReference>
<dbReference type="InterPro" id="IPR002318">
    <property type="entry name" value="Ala-tRNA-lgiase_IIc"/>
</dbReference>
<dbReference type="InterPro" id="IPR018162">
    <property type="entry name" value="Ala-tRNA-ligase_IIc_anticod-bd"/>
</dbReference>
<dbReference type="InterPro" id="IPR018165">
    <property type="entry name" value="Ala-tRNA-synth_IIc_core"/>
</dbReference>
<dbReference type="InterPro" id="IPR018164">
    <property type="entry name" value="Ala-tRNA-synth_IIc_N"/>
</dbReference>
<dbReference type="InterPro" id="IPR050058">
    <property type="entry name" value="Ala-tRNA_ligase"/>
</dbReference>
<dbReference type="InterPro" id="IPR023033">
    <property type="entry name" value="Ala_tRNA_ligase_euk/bac"/>
</dbReference>
<dbReference type="InterPro" id="IPR003156">
    <property type="entry name" value="DHHA1_dom"/>
</dbReference>
<dbReference type="InterPro" id="IPR018163">
    <property type="entry name" value="Thr/Ala-tRNA-synth_IIc_edit"/>
</dbReference>
<dbReference type="InterPro" id="IPR009000">
    <property type="entry name" value="Transl_B-barrel_sf"/>
</dbReference>
<dbReference type="InterPro" id="IPR012947">
    <property type="entry name" value="tRNA_SAD"/>
</dbReference>
<dbReference type="NCBIfam" id="TIGR00344">
    <property type="entry name" value="alaS"/>
    <property type="match status" value="1"/>
</dbReference>
<dbReference type="PANTHER" id="PTHR11777:SF9">
    <property type="entry name" value="ALANINE--TRNA LIGASE, CYTOPLASMIC"/>
    <property type="match status" value="1"/>
</dbReference>
<dbReference type="PANTHER" id="PTHR11777">
    <property type="entry name" value="ALANYL-TRNA SYNTHETASE"/>
    <property type="match status" value="1"/>
</dbReference>
<dbReference type="Pfam" id="PF02272">
    <property type="entry name" value="DHHA1"/>
    <property type="match status" value="1"/>
</dbReference>
<dbReference type="Pfam" id="PF01411">
    <property type="entry name" value="tRNA-synt_2c"/>
    <property type="match status" value="1"/>
</dbReference>
<dbReference type="Pfam" id="PF07973">
    <property type="entry name" value="tRNA_SAD"/>
    <property type="match status" value="1"/>
</dbReference>
<dbReference type="PRINTS" id="PR00980">
    <property type="entry name" value="TRNASYNTHALA"/>
</dbReference>
<dbReference type="SMART" id="SM00863">
    <property type="entry name" value="tRNA_SAD"/>
    <property type="match status" value="1"/>
</dbReference>
<dbReference type="SUPFAM" id="SSF55681">
    <property type="entry name" value="Class II aaRS and biotin synthetases"/>
    <property type="match status" value="1"/>
</dbReference>
<dbReference type="SUPFAM" id="SSF101353">
    <property type="entry name" value="Putative anticodon-binding domain of alanyl-tRNA synthetase (AlaRS)"/>
    <property type="match status" value="1"/>
</dbReference>
<dbReference type="SUPFAM" id="SSF55186">
    <property type="entry name" value="ThrRS/AlaRS common domain"/>
    <property type="match status" value="1"/>
</dbReference>
<dbReference type="SUPFAM" id="SSF50447">
    <property type="entry name" value="Translation proteins"/>
    <property type="match status" value="1"/>
</dbReference>
<dbReference type="PROSITE" id="PS50860">
    <property type="entry name" value="AA_TRNA_LIGASE_II_ALA"/>
    <property type="match status" value="1"/>
</dbReference>
<sequence length="902" mass="104553">MNKHLSGSQIRQIWLDFFKSKKHEIIESKSLVPINDPSLLWINAGVATLKKYFSGEENPINPRLANSQRCIRANDIENVGVTSRHHTVFEMLGNFSIGDYFKKEAIEFGYELLTKFYGLNKDKLYITIYEDDNDAFNYWVGQGINPHHIIRCDRKRNFWDLGSGPCGPSTEIYYDRGEKYDPNKLGEKLFFEDIENDRYIEVWNIVFSQFNNTGNNNYTELLRKNIDTGASLERFACILQDVPTNYDTDLYLPIIRTIEKHTNHKYVVDHYFSKDQSEQDVLRAFRVIADHLKCGVFAIADGVLPGAKDRDYIIRKLLRRAFVYAKKLNAKPEYLVETINVIINTYSDFFKYLIPNKEIVIQAITNEANNFTKTLDYGFEIFNEAKTTNNITAETIFKLVETYGFPLDLIKELSAEAKIKLDLDGFEELFKKHQEISKANNGEVGLKKQNENLLKFKTPSKFFYDKNNIKTKVVAIFDDKFNPVDQIEVGSGWAVFESTPIYATSGGQRFDEGYCLKKGNLVVHFDNVIKAPNKQHLHHFKKASFWLNEKVELMHDENWRKLVRKNHSLEHILHATLKNTISETIKQSGAFKSAAKATLDFNYPTRLTDEDLDKIETKMRQVIADKIPVTVHHVDYETSQKMNAIAYFEEEYKKHELLRVIKIGDYSVELCGGTHVDNTKEIEECFITNLYSLGAGRWRIEIMSSYETIYNYLVDKQNEIKQEKDHMFNELGNYDLTHYLDFSKKLHSFNLPNSIKDLRKTLRAFEQIKEEYKAIKLELDKKKTKDRANQIKKLALDNLEHKIVLLFFDKEEHKALSIAHSELVNEKPDHLFFFINKSDNKINYLIGIKNATYKLNAKLLIDKVNAMFGAKGGGKQNFAQGGFSTDKDVGKLKADFVNICIT</sequence>
<accession>Q7NBY8</accession>
<keyword id="KW-0030">Aminoacyl-tRNA synthetase</keyword>
<keyword id="KW-0067">ATP-binding</keyword>
<keyword id="KW-0963">Cytoplasm</keyword>
<keyword id="KW-0436">Ligase</keyword>
<keyword id="KW-0479">Metal-binding</keyword>
<keyword id="KW-0547">Nucleotide-binding</keyword>
<keyword id="KW-0648">Protein biosynthesis</keyword>
<keyword id="KW-1185">Reference proteome</keyword>
<keyword id="KW-0694">RNA-binding</keyword>
<keyword id="KW-0820">tRNA-binding</keyword>
<keyword id="KW-0862">Zinc</keyword>
<organism>
    <name type="scientific">Mycoplasmoides gallisepticum (strain R(low / passage 15 / clone 2))</name>
    <name type="common">Mycoplasma gallisepticum</name>
    <dbReference type="NCBI Taxonomy" id="710127"/>
    <lineage>
        <taxon>Bacteria</taxon>
        <taxon>Bacillati</taxon>
        <taxon>Mycoplasmatota</taxon>
        <taxon>Mycoplasmoidales</taxon>
        <taxon>Mycoplasmoidaceae</taxon>
        <taxon>Mycoplasmoides</taxon>
    </lineage>
</organism>
<comment type="function">
    <text evidence="1">Catalyzes the attachment of alanine to tRNA(Ala) in a two-step reaction: alanine is first activated by ATP to form Ala-AMP and then transferred to the acceptor end of tRNA(Ala). Also edits incorrectly charged Ser-tRNA(Ala) and Gly-tRNA(Ala) via its editing domain.</text>
</comment>
<comment type="catalytic activity">
    <reaction evidence="1">
        <text>tRNA(Ala) + L-alanine + ATP = L-alanyl-tRNA(Ala) + AMP + diphosphate</text>
        <dbReference type="Rhea" id="RHEA:12540"/>
        <dbReference type="Rhea" id="RHEA-COMP:9657"/>
        <dbReference type="Rhea" id="RHEA-COMP:9923"/>
        <dbReference type="ChEBI" id="CHEBI:30616"/>
        <dbReference type="ChEBI" id="CHEBI:33019"/>
        <dbReference type="ChEBI" id="CHEBI:57972"/>
        <dbReference type="ChEBI" id="CHEBI:78442"/>
        <dbReference type="ChEBI" id="CHEBI:78497"/>
        <dbReference type="ChEBI" id="CHEBI:456215"/>
        <dbReference type="EC" id="6.1.1.7"/>
    </reaction>
</comment>
<comment type="cofactor">
    <cofactor evidence="1">
        <name>Zn(2+)</name>
        <dbReference type="ChEBI" id="CHEBI:29105"/>
    </cofactor>
    <text evidence="1">Binds 1 zinc ion per subunit.</text>
</comment>
<comment type="subcellular location">
    <subcellularLocation>
        <location evidence="1">Cytoplasm</location>
    </subcellularLocation>
</comment>
<comment type="domain">
    <text evidence="1">Consists of three domains; the N-terminal catalytic domain, the editing domain and the C-terminal C-Ala domain. The editing domain removes incorrectly charged amino acids, while the C-Ala domain, along with tRNA(Ala), serves as a bridge to cooperatively bring together the editing and aminoacylation centers thus stimulating deacylation of misacylated tRNAs.</text>
</comment>
<comment type="similarity">
    <text evidence="1">Belongs to the class-II aminoacyl-tRNA synthetase family.</text>
</comment>
<gene>
    <name evidence="1" type="primary">alaS</name>
    <name type="ordered locus">MYCGA1220</name>
    <name type="ORF">MGA_0834</name>
</gene>
<evidence type="ECO:0000255" key="1">
    <source>
        <dbReference type="HAMAP-Rule" id="MF_00036"/>
    </source>
</evidence>